<comment type="function">
    <text evidence="1">DNA-dependent RNA polymerase catalyzes the transcription of DNA into RNA using the four ribonucleoside triphosphates as substrates.</text>
</comment>
<comment type="catalytic activity">
    <reaction evidence="1">
        <text>RNA(n) + a ribonucleoside 5'-triphosphate = RNA(n+1) + diphosphate</text>
        <dbReference type="Rhea" id="RHEA:21248"/>
        <dbReference type="Rhea" id="RHEA-COMP:14527"/>
        <dbReference type="Rhea" id="RHEA-COMP:17342"/>
        <dbReference type="ChEBI" id="CHEBI:33019"/>
        <dbReference type="ChEBI" id="CHEBI:61557"/>
        <dbReference type="ChEBI" id="CHEBI:140395"/>
        <dbReference type="EC" id="2.7.7.6"/>
    </reaction>
</comment>
<comment type="subunit">
    <text evidence="1">Homodimer. The RNAP catalytic core consists of 2 alpha, 1 beta, 1 beta' and 1 omega subunit. When a sigma factor is associated with the core the holoenzyme is formed, which can initiate transcription.</text>
</comment>
<comment type="domain">
    <text evidence="1">The N-terminal domain is essential for RNAP assembly and basal transcription, whereas the C-terminal domain is involved in interaction with transcriptional regulators and with upstream promoter elements.</text>
</comment>
<comment type="similarity">
    <text evidence="1">Belongs to the RNA polymerase alpha chain family.</text>
</comment>
<keyword id="KW-0240">DNA-directed RNA polymerase</keyword>
<keyword id="KW-0548">Nucleotidyltransferase</keyword>
<keyword id="KW-1185">Reference proteome</keyword>
<keyword id="KW-0804">Transcription</keyword>
<keyword id="KW-0808">Transferase</keyword>
<organism>
    <name type="scientific">Burkholderia mallei (strain ATCC 23344)</name>
    <dbReference type="NCBI Taxonomy" id="243160"/>
    <lineage>
        <taxon>Bacteria</taxon>
        <taxon>Pseudomonadati</taxon>
        <taxon>Pseudomonadota</taxon>
        <taxon>Betaproteobacteria</taxon>
        <taxon>Burkholderiales</taxon>
        <taxon>Burkholderiaceae</taxon>
        <taxon>Burkholderia</taxon>
        <taxon>pseudomallei group</taxon>
    </lineage>
</organism>
<proteinExistence type="inferred from homology"/>
<accession>Q62GN1</accession>
<gene>
    <name evidence="1" type="primary">rpoA</name>
    <name type="ordered locus">BMA2606</name>
</gene>
<sequence>MQTSLLKPKIIAVESLGENHAKVVMEPFERGYGHTLGNALRRVLLSSMVGYAPTEVTIAGVVHEYSTLDGVQEDVVNLLLNLKGVVFKLHNRDEVTVTLRKEGEGVVTAGDIELAHDCEVINPNHVIAHLSKGGKLDVQIKVEKGRGYVPGNVRRYGDETAKIIGRIVLDASFSPVRRVSYTVESARVEQRTDLDKLVMNIETSGVITPEEAIRQSARILVDQLSVFAALEGTETAAEAPSRAPQIDPILLRPVDDLELTVRSANCLKAENIYYIGDLIQRTENELLKTPNLGRKSLNEIKEVLASRGLTLGMKLENWPPAGLDK</sequence>
<name>RPOA_BURMA</name>
<dbReference type="EC" id="2.7.7.6" evidence="1"/>
<dbReference type="EMBL" id="CP000010">
    <property type="protein sequence ID" value="AAU47844.1"/>
    <property type="molecule type" value="Genomic_DNA"/>
</dbReference>
<dbReference type="RefSeq" id="WP_004197925.1">
    <property type="nucleotide sequence ID" value="NC_006348.1"/>
</dbReference>
<dbReference type="RefSeq" id="YP_104140.1">
    <property type="nucleotide sequence ID" value="NC_006348.1"/>
</dbReference>
<dbReference type="SMR" id="Q62GN1"/>
<dbReference type="GeneID" id="93061806"/>
<dbReference type="KEGG" id="bma:BMA2606"/>
<dbReference type="PATRIC" id="fig|243160.12.peg.2677"/>
<dbReference type="eggNOG" id="COG0202">
    <property type="taxonomic scope" value="Bacteria"/>
</dbReference>
<dbReference type="HOGENOM" id="CLU_053084_0_0_4"/>
<dbReference type="Proteomes" id="UP000006693">
    <property type="component" value="Chromosome 1"/>
</dbReference>
<dbReference type="GO" id="GO:0005737">
    <property type="term" value="C:cytoplasm"/>
    <property type="evidence" value="ECO:0007669"/>
    <property type="project" value="UniProtKB-ARBA"/>
</dbReference>
<dbReference type="GO" id="GO:0000428">
    <property type="term" value="C:DNA-directed RNA polymerase complex"/>
    <property type="evidence" value="ECO:0007669"/>
    <property type="project" value="UniProtKB-KW"/>
</dbReference>
<dbReference type="GO" id="GO:0003677">
    <property type="term" value="F:DNA binding"/>
    <property type="evidence" value="ECO:0007669"/>
    <property type="project" value="UniProtKB-UniRule"/>
</dbReference>
<dbReference type="GO" id="GO:0003899">
    <property type="term" value="F:DNA-directed RNA polymerase activity"/>
    <property type="evidence" value="ECO:0007669"/>
    <property type="project" value="UniProtKB-UniRule"/>
</dbReference>
<dbReference type="GO" id="GO:0046983">
    <property type="term" value="F:protein dimerization activity"/>
    <property type="evidence" value="ECO:0007669"/>
    <property type="project" value="InterPro"/>
</dbReference>
<dbReference type="GO" id="GO:0006351">
    <property type="term" value="P:DNA-templated transcription"/>
    <property type="evidence" value="ECO:0007669"/>
    <property type="project" value="UniProtKB-UniRule"/>
</dbReference>
<dbReference type="CDD" id="cd06928">
    <property type="entry name" value="RNAP_alpha_NTD"/>
    <property type="match status" value="1"/>
</dbReference>
<dbReference type="FunFam" id="1.10.150.20:FF:000001">
    <property type="entry name" value="DNA-directed RNA polymerase subunit alpha"/>
    <property type="match status" value="1"/>
</dbReference>
<dbReference type="FunFam" id="2.170.120.12:FF:000001">
    <property type="entry name" value="DNA-directed RNA polymerase subunit alpha"/>
    <property type="match status" value="1"/>
</dbReference>
<dbReference type="Gene3D" id="1.10.150.20">
    <property type="entry name" value="5' to 3' exonuclease, C-terminal subdomain"/>
    <property type="match status" value="1"/>
</dbReference>
<dbReference type="Gene3D" id="2.170.120.12">
    <property type="entry name" value="DNA-directed RNA polymerase, insert domain"/>
    <property type="match status" value="1"/>
</dbReference>
<dbReference type="Gene3D" id="3.30.1360.10">
    <property type="entry name" value="RNA polymerase, RBP11-like subunit"/>
    <property type="match status" value="1"/>
</dbReference>
<dbReference type="HAMAP" id="MF_00059">
    <property type="entry name" value="RNApol_bact_RpoA"/>
    <property type="match status" value="1"/>
</dbReference>
<dbReference type="InterPro" id="IPR011262">
    <property type="entry name" value="DNA-dir_RNA_pol_insert"/>
</dbReference>
<dbReference type="InterPro" id="IPR011263">
    <property type="entry name" value="DNA-dir_RNA_pol_RpoA/D/Rpb3"/>
</dbReference>
<dbReference type="InterPro" id="IPR011773">
    <property type="entry name" value="DNA-dir_RpoA"/>
</dbReference>
<dbReference type="InterPro" id="IPR036603">
    <property type="entry name" value="RBP11-like"/>
</dbReference>
<dbReference type="InterPro" id="IPR011260">
    <property type="entry name" value="RNAP_asu_C"/>
</dbReference>
<dbReference type="InterPro" id="IPR036643">
    <property type="entry name" value="RNApol_insert_sf"/>
</dbReference>
<dbReference type="NCBIfam" id="NF003513">
    <property type="entry name" value="PRK05182.1-2"/>
    <property type="match status" value="1"/>
</dbReference>
<dbReference type="NCBIfam" id="NF003519">
    <property type="entry name" value="PRK05182.2-5"/>
    <property type="match status" value="1"/>
</dbReference>
<dbReference type="NCBIfam" id="TIGR02027">
    <property type="entry name" value="rpoA"/>
    <property type="match status" value="1"/>
</dbReference>
<dbReference type="Pfam" id="PF01000">
    <property type="entry name" value="RNA_pol_A_bac"/>
    <property type="match status" value="1"/>
</dbReference>
<dbReference type="Pfam" id="PF03118">
    <property type="entry name" value="RNA_pol_A_CTD"/>
    <property type="match status" value="1"/>
</dbReference>
<dbReference type="Pfam" id="PF01193">
    <property type="entry name" value="RNA_pol_L"/>
    <property type="match status" value="1"/>
</dbReference>
<dbReference type="SMART" id="SM00662">
    <property type="entry name" value="RPOLD"/>
    <property type="match status" value="1"/>
</dbReference>
<dbReference type="SUPFAM" id="SSF47789">
    <property type="entry name" value="C-terminal domain of RNA polymerase alpha subunit"/>
    <property type="match status" value="1"/>
</dbReference>
<dbReference type="SUPFAM" id="SSF56553">
    <property type="entry name" value="Insert subdomain of RNA polymerase alpha subunit"/>
    <property type="match status" value="1"/>
</dbReference>
<dbReference type="SUPFAM" id="SSF55257">
    <property type="entry name" value="RBP11-like subunits of RNA polymerase"/>
    <property type="match status" value="1"/>
</dbReference>
<reference key="1">
    <citation type="journal article" date="2004" name="Proc. Natl. Acad. Sci. U.S.A.">
        <title>Structural flexibility in the Burkholderia mallei genome.</title>
        <authorList>
            <person name="Nierman W.C."/>
            <person name="DeShazer D."/>
            <person name="Kim H.S."/>
            <person name="Tettelin H."/>
            <person name="Nelson K.E."/>
            <person name="Feldblyum T.V."/>
            <person name="Ulrich R.L."/>
            <person name="Ronning C.M."/>
            <person name="Brinkac L.M."/>
            <person name="Daugherty S.C."/>
            <person name="Davidsen T.D."/>
            <person name="DeBoy R.T."/>
            <person name="Dimitrov G."/>
            <person name="Dodson R.J."/>
            <person name="Durkin A.S."/>
            <person name="Gwinn M.L."/>
            <person name="Haft D.H."/>
            <person name="Khouri H.M."/>
            <person name="Kolonay J.F."/>
            <person name="Madupu R."/>
            <person name="Mohammoud Y."/>
            <person name="Nelson W.C."/>
            <person name="Radune D."/>
            <person name="Romero C.M."/>
            <person name="Sarria S."/>
            <person name="Selengut J."/>
            <person name="Shamblin C."/>
            <person name="Sullivan S.A."/>
            <person name="White O."/>
            <person name="Yu Y."/>
            <person name="Zafar N."/>
            <person name="Zhou L."/>
            <person name="Fraser C.M."/>
        </authorList>
    </citation>
    <scope>NUCLEOTIDE SEQUENCE [LARGE SCALE GENOMIC DNA]</scope>
    <source>
        <strain>ATCC 23344</strain>
    </source>
</reference>
<feature type="chain" id="PRO_0000175282" description="DNA-directed RNA polymerase subunit alpha">
    <location>
        <begin position="1"/>
        <end position="325"/>
    </location>
</feature>
<feature type="region of interest" description="Alpha N-terminal domain (alpha-NTD)" evidence="1">
    <location>
        <begin position="1"/>
        <end position="231"/>
    </location>
</feature>
<feature type="region of interest" description="Alpha C-terminal domain (alpha-CTD)" evidence="1">
    <location>
        <begin position="246"/>
        <end position="325"/>
    </location>
</feature>
<evidence type="ECO:0000255" key="1">
    <source>
        <dbReference type="HAMAP-Rule" id="MF_00059"/>
    </source>
</evidence>
<protein>
    <recommendedName>
        <fullName evidence="1">DNA-directed RNA polymerase subunit alpha</fullName>
        <shortName evidence="1">RNAP subunit alpha</shortName>
        <ecNumber evidence="1">2.7.7.6</ecNumber>
    </recommendedName>
    <alternativeName>
        <fullName evidence="1">RNA polymerase subunit alpha</fullName>
    </alternativeName>
    <alternativeName>
        <fullName evidence="1">Transcriptase subunit alpha</fullName>
    </alternativeName>
</protein>